<feature type="signal peptide">
    <location>
        <begin position="1"/>
        <end position="18"/>
    </location>
</feature>
<feature type="chain" id="PRO_0000014906" description="Polymeric immunoglobulin receptor">
    <location>
        <begin position="19"/>
        <end position="769"/>
    </location>
</feature>
<feature type="chain" id="PRO_0000014907" description="Secretory component">
    <location>
        <begin position="19"/>
        <end position="611"/>
    </location>
</feature>
<feature type="topological domain" description="Extracellular" evidence="3">
    <location>
        <begin position="19"/>
        <end position="643"/>
    </location>
</feature>
<feature type="transmembrane region" description="Helical" evidence="3">
    <location>
        <begin position="644"/>
        <end position="666"/>
    </location>
</feature>
<feature type="topological domain" description="Cytoplasmic" evidence="3">
    <location>
        <begin position="667"/>
        <end position="769"/>
    </location>
</feature>
<feature type="domain" description="Ig-like V-type 1; required for binding to polymeric IgA and IgM" evidence="2">
    <location>
        <begin position="21"/>
        <end position="126"/>
    </location>
</feature>
<feature type="domain" description="Ig-like V-type 2">
    <location>
        <begin position="135"/>
        <end position="237"/>
    </location>
</feature>
<feature type="domain" description="Ig-like V-type 3">
    <location>
        <begin position="240"/>
        <end position="341"/>
    </location>
</feature>
<feature type="domain" description="Ig-like V-type 4">
    <location>
        <begin position="353"/>
        <end position="457"/>
    </location>
</feature>
<feature type="domain" description="Ig-like V-type 5">
    <location>
        <begin position="463"/>
        <end position="563"/>
    </location>
</feature>
<feature type="region of interest" description="Disordered" evidence="5">
    <location>
        <begin position="569"/>
        <end position="604"/>
    </location>
</feature>
<feature type="region of interest" description="Disordered" evidence="5">
    <location>
        <begin position="619"/>
        <end position="640"/>
    </location>
</feature>
<feature type="region of interest" description="Disordered" evidence="5">
    <location>
        <begin position="719"/>
        <end position="741"/>
    </location>
</feature>
<feature type="compositionally biased region" description="Basic and acidic residues" evidence="5">
    <location>
        <begin position="595"/>
        <end position="604"/>
    </location>
</feature>
<feature type="compositionally biased region" description="Basic and acidic residues" evidence="5">
    <location>
        <begin position="731"/>
        <end position="741"/>
    </location>
</feature>
<feature type="modified residue" description="Phosphoserine" evidence="6">
    <location>
        <position position="678"/>
    </location>
</feature>
<feature type="modified residue" description="Phosphoserine" evidence="6">
    <location>
        <position position="687"/>
    </location>
</feature>
<feature type="modified residue" description="Phosphoserine" evidence="6">
    <location>
        <position position="694"/>
    </location>
</feature>
<feature type="modified residue" description="Phosphoserine" evidence="1">
    <location>
        <position position="740"/>
    </location>
</feature>
<feature type="glycosylation site" description="N-linked (GlcNAc...) asparagine" evidence="3">
    <location>
        <position position="90"/>
    </location>
</feature>
<feature type="glycosylation site" description="N-linked (GlcNAc...) asparagine" evidence="3">
    <location>
        <position position="135"/>
    </location>
</feature>
<feature type="glycosylation site" description="N-linked (GlcNAc...) asparagine" evidence="3">
    <location>
        <position position="206"/>
    </location>
</feature>
<feature type="glycosylation site" description="N-linked (GlcNAc...) asparagine" evidence="3">
    <location>
        <position position="471"/>
    </location>
</feature>
<feature type="disulfide bond" evidence="4">
    <location>
        <begin position="40"/>
        <end position="110"/>
    </location>
</feature>
<feature type="disulfide bond" evidence="4">
    <location>
        <begin position="152"/>
        <end position="220"/>
    </location>
</feature>
<feature type="disulfide bond" evidence="4">
    <location>
        <begin position="257"/>
        <end position="324"/>
    </location>
</feature>
<feature type="disulfide bond" evidence="4">
    <location>
        <begin position="370"/>
        <end position="440"/>
    </location>
</feature>
<feature type="disulfide bond" evidence="4">
    <location>
        <begin position="484"/>
        <end position="546"/>
    </location>
</feature>
<sequence length="769" mass="84798">MRLSLFALLVTVFSGVSTQSPIFGPQDVSSIEGNSVSITCYYPDTSVNRHTRKYWCRQGANGYCATLISSNGYLSKEYSGRASLINFPENSTFVINIAHLTQEDTGSYKCGLGTTNRGLFFDVSLEVSQVPEFPNDTHVYTKDIGRTVTIECRFKEGNAHSKKSLCKKRGEACEVVIDSTEYVDPSYKDRAILFMKGTSRDIFYVNISHLIPSDAGLYVCQAGEGPSADKNNADLQVLEPEPELLYKDLRSSVTFECDLGREVANDAKYLCRKNKETCDVIINTLGKRDPAFEGRILLTPRDDNGRFSVLITGLRKEDAGHYQCGAHSSGLPQEGWPVQAWQLFVNEESTIPNSRSVVKGVTGGSVAIVCPYNPKESSSLKYWCHWEADENGRCPVLVGTQALVQEGYEGRLALFDQPGSGAYTVILNQLTTQDSGFYWCLTDGDSRWRTTIELQVAEATKKPDLEVTPQNATAVIGETFTISCHYPCKFYSQEKYWCKWSNDGCHILPSHDEGARQSSVSCDQSSQIVSMTLNPVKKEDEGWYWCGVKEGQVYGETTAIYVAVEERTRGSPHINPTDANARAKDAPEEEAMESSVREDENKANLDPRLFADEREIQNAGDQAQENRASGNAGSAGGQSGSSKVLFSTLVPLGLVLAVGAVAVWVARVRHRKNVDRMSISSYRTDISMGDFRNSRDLGGNDNMGATPDTQETVLEGKDEIETTTECTTEPEESKKAKRSSKEEADMAYSAFLFQSSTIAAQVHDGPQEA</sequence>
<comment type="function">
    <molecule>Polymeric immunoglobulin receptor</molecule>
    <text evidence="2">Mediates selective transcytosis of polymeric IgA and IgM across mucosal epithelial cells. Binds polymeric IgA and IgM at the basolateral surface of epithelial cells. The complex is then transported across the cell to be secreted at the apical surface. During this process, a cleavage occurs that separates the extracellular (known as the secretory component) from the transmembrane segment.</text>
</comment>
<comment type="function">
    <molecule>Secretory component</molecule>
    <text evidence="2">Through its N-linked glycans ensures anchoring of secretory IgA (sIgA) molecules to mucus lining the epithelial surface to neutralize extracellular pathogens. On its own (free form) may act as a non-specific microbial scavenger to prevent pathogen interaction with epithelial cells.</text>
</comment>
<comment type="subunit">
    <text evidence="2">Interacts (mainly via CDR1-like domain) with dimeric IgA. Interacts (mainly via CDR2-like domain) with pentameric IgM.</text>
</comment>
<comment type="subunit">
    <molecule>Secretory component</molecule>
    <text evidence="2">Either free or part of the secretory IgA (sIgA) complex that consists of two, four or five IgA monomers, and two additional non-Ig polypeptides, namely the JCHAIN and the secretory component (the proteolytic product of PIGR). Free secretory component interacts with bacterial antigens toxA of C.difficile and eae of E.coli.</text>
</comment>
<comment type="subcellular location">
    <molecule>Polymeric immunoglobulin receptor</molecule>
    <subcellularLocation>
        <location evidence="2">Cell membrane</location>
        <topology evidence="3">Single-pass type I membrane protein</topology>
    </subcellularLocation>
</comment>
<comment type="subcellular location">
    <molecule>Secretory component</molecule>
    <subcellularLocation>
        <location evidence="2">Secreted</location>
    </subcellularLocation>
</comment>
<comment type="domain">
    <text evidence="2">The Ig-like V-type 1/D1 domain contains three complementarity determining region-like loops CDR1-3, which mediate interaction with IgA and IgM.</text>
</comment>
<comment type="PTM">
    <text evidence="2">N-glycosylated. N-glycosylation is required for anchoring IgA molecules to mucus, but is not necessary for Ig binding.</text>
</comment>
<proteinExistence type="evidence at protein level"/>
<dbReference type="EMBL" id="X15741">
    <property type="protein sequence ID" value="CAA33758.1"/>
    <property type="molecule type" value="mRNA"/>
</dbReference>
<dbReference type="PIR" id="S05407">
    <property type="entry name" value="QRRTGS"/>
</dbReference>
<dbReference type="RefSeq" id="NP_001416471.1">
    <property type="nucleotide sequence ID" value="NM_001429542.1"/>
</dbReference>
<dbReference type="RefSeq" id="NP_001416472.1">
    <property type="nucleotide sequence ID" value="NM_001429543.1"/>
</dbReference>
<dbReference type="RefSeq" id="NP_036855.3">
    <property type="nucleotide sequence ID" value="NM_012723.5"/>
</dbReference>
<dbReference type="SMR" id="P15083"/>
<dbReference type="CORUM" id="P15083"/>
<dbReference type="FunCoup" id="P15083">
    <property type="interactions" value="105"/>
</dbReference>
<dbReference type="STRING" id="10116.ENSRNOP00000073662"/>
<dbReference type="GlyCosmos" id="P15083">
    <property type="glycosylation" value="4 sites, No reported glycans"/>
</dbReference>
<dbReference type="GlyGen" id="P15083">
    <property type="glycosylation" value="4 sites"/>
</dbReference>
<dbReference type="iPTMnet" id="P15083"/>
<dbReference type="PhosphoSitePlus" id="P15083"/>
<dbReference type="PaxDb" id="10116-ENSRNOP00000005853"/>
<dbReference type="GeneID" id="25046"/>
<dbReference type="KEGG" id="rno:25046"/>
<dbReference type="UCSC" id="RGD:3328">
    <property type="organism name" value="rat"/>
</dbReference>
<dbReference type="AGR" id="RGD:3328"/>
<dbReference type="CTD" id="5284"/>
<dbReference type="RGD" id="3328">
    <property type="gene designation" value="Pigr"/>
</dbReference>
<dbReference type="eggNOG" id="ENOG502QPKT">
    <property type="taxonomic scope" value="Eukaryota"/>
</dbReference>
<dbReference type="InParanoid" id="P15083"/>
<dbReference type="PhylomeDB" id="P15083"/>
<dbReference type="Reactome" id="R-RNO-6798695">
    <property type="pathway name" value="Neutrophil degranulation"/>
</dbReference>
<dbReference type="PRO" id="PR:P15083"/>
<dbReference type="Proteomes" id="UP000002494">
    <property type="component" value="Unplaced"/>
</dbReference>
<dbReference type="GO" id="GO:0005615">
    <property type="term" value="C:extracellular space"/>
    <property type="evidence" value="ECO:0000266"/>
    <property type="project" value="RGD"/>
</dbReference>
<dbReference type="GO" id="GO:0005886">
    <property type="term" value="C:plasma membrane"/>
    <property type="evidence" value="ECO:0000250"/>
    <property type="project" value="UniProtKB"/>
</dbReference>
<dbReference type="GO" id="GO:0043235">
    <property type="term" value="C:receptor complex"/>
    <property type="evidence" value="ECO:0000266"/>
    <property type="project" value="RGD"/>
</dbReference>
<dbReference type="GO" id="GO:0055038">
    <property type="term" value="C:recycling endosome membrane"/>
    <property type="evidence" value="ECO:0000314"/>
    <property type="project" value="RGD"/>
</dbReference>
<dbReference type="GO" id="GO:0071751">
    <property type="term" value="C:secretory IgA immunoglobulin complex"/>
    <property type="evidence" value="ECO:0000250"/>
    <property type="project" value="UniProtKB"/>
</dbReference>
<dbReference type="GO" id="GO:0005154">
    <property type="term" value="F:epidermal growth factor receptor binding"/>
    <property type="evidence" value="ECO:0000353"/>
    <property type="project" value="RGD"/>
</dbReference>
<dbReference type="GO" id="GO:0001790">
    <property type="term" value="F:polymeric immunoglobulin binding"/>
    <property type="evidence" value="ECO:0000266"/>
    <property type="project" value="RGD"/>
</dbReference>
<dbReference type="GO" id="GO:0001792">
    <property type="term" value="F:polymeric immunoglobulin receptor activity"/>
    <property type="evidence" value="ECO:0000266"/>
    <property type="project" value="RGD"/>
</dbReference>
<dbReference type="GO" id="GO:0004888">
    <property type="term" value="F:transmembrane signaling receptor activity"/>
    <property type="evidence" value="ECO:0000318"/>
    <property type="project" value="GO_Central"/>
</dbReference>
<dbReference type="GO" id="GO:0001580">
    <property type="term" value="P:detection of chemical stimulus involved in sensory perception of bitter taste"/>
    <property type="evidence" value="ECO:0000266"/>
    <property type="project" value="RGD"/>
</dbReference>
<dbReference type="GO" id="GO:0007173">
    <property type="term" value="P:epidermal growth factor receptor signaling pathway"/>
    <property type="evidence" value="ECO:0000266"/>
    <property type="project" value="RGD"/>
</dbReference>
<dbReference type="GO" id="GO:0038093">
    <property type="term" value="P:Fc receptor signaling pathway"/>
    <property type="evidence" value="ECO:0000266"/>
    <property type="project" value="RGD"/>
</dbReference>
<dbReference type="GO" id="GO:0002415">
    <property type="term" value="P:immunoglobulin transcytosis in epithelial cells mediated by polymeric immunoglobulin receptor"/>
    <property type="evidence" value="ECO:0000250"/>
    <property type="project" value="UniProtKB"/>
</dbReference>
<dbReference type="GO" id="GO:0043113">
    <property type="term" value="P:receptor clustering"/>
    <property type="evidence" value="ECO:0000266"/>
    <property type="project" value="RGD"/>
</dbReference>
<dbReference type="GO" id="GO:0007165">
    <property type="term" value="P:signal transduction"/>
    <property type="evidence" value="ECO:0000318"/>
    <property type="project" value="GO_Central"/>
</dbReference>
<dbReference type="CDD" id="cd05716">
    <property type="entry name" value="IgV_pIgR_like"/>
    <property type="match status" value="4"/>
</dbReference>
<dbReference type="FunFam" id="2.60.40.10:FF:001340">
    <property type="entry name" value="Polymeric immunoglobulin receptor"/>
    <property type="match status" value="3"/>
</dbReference>
<dbReference type="FunFam" id="2.60.40.10:FF:002327">
    <property type="entry name" value="Polymeric immunoglobulin receptor"/>
    <property type="match status" value="1"/>
</dbReference>
<dbReference type="Gene3D" id="2.60.40.10">
    <property type="entry name" value="Immunoglobulins"/>
    <property type="match status" value="5"/>
</dbReference>
<dbReference type="InterPro" id="IPR050671">
    <property type="entry name" value="CD300_family_receptors"/>
</dbReference>
<dbReference type="InterPro" id="IPR007110">
    <property type="entry name" value="Ig-like_dom"/>
</dbReference>
<dbReference type="InterPro" id="IPR036179">
    <property type="entry name" value="Ig-like_dom_sf"/>
</dbReference>
<dbReference type="InterPro" id="IPR013783">
    <property type="entry name" value="Ig-like_fold"/>
</dbReference>
<dbReference type="InterPro" id="IPR003599">
    <property type="entry name" value="Ig_sub"/>
</dbReference>
<dbReference type="InterPro" id="IPR013106">
    <property type="entry name" value="Ig_V-set"/>
</dbReference>
<dbReference type="PANTHER" id="PTHR11860:SF82">
    <property type="entry name" value="POLYMERIC IMMUNOGLOBULIN RECEPTOR"/>
    <property type="match status" value="1"/>
</dbReference>
<dbReference type="PANTHER" id="PTHR11860">
    <property type="entry name" value="POLYMERIC-IMMUNOGLOBULIN RECEPTOR"/>
    <property type="match status" value="1"/>
</dbReference>
<dbReference type="Pfam" id="PF07686">
    <property type="entry name" value="V-set"/>
    <property type="match status" value="5"/>
</dbReference>
<dbReference type="SMART" id="SM00409">
    <property type="entry name" value="IG"/>
    <property type="match status" value="5"/>
</dbReference>
<dbReference type="SMART" id="SM00406">
    <property type="entry name" value="IGv"/>
    <property type="match status" value="5"/>
</dbReference>
<dbReference type="SUPFAM" id="SSF48726">
    <property type="entry name" value="Immunoglobulin"/>
    <property type="match status" value="5"/>
</dbReference>
<dbReference type="PROSITE" id="PS50835">
    <property type="entry name" value="IG_LIKE"/>
    <property type="match status" value="2"/>
</dbReference>
<keyword id="KW-1003">Cell membrane</keyword>
<keyword id="KW-1015">Disulfide bond</keyword>
<keyword id="KW-0325">Glycoprotein</keyword>
<keyword id="KW-0393">Immunoglobulin domain</keyword>
<keyword id="KW-0472">Membrane</keyword>
<keyword id="KW-0597">Phosphoprotein</keyword>
<keyword id="KW-1185">Reference proteome</keyword>
<keyword id="KW-0677">Repeat</keyword>
<keyword id="KW-0964">Secreted</keyword>
<keyword id="KW-0732">Signal</keyword>
<keyword id="KW-0812">Transmembrane</keyword>
<keyword id="KW-1133">Transmembrane helix</keyword>
<organism>
    <name type="scientific">Rattus norvegicus</name>
    <name type="common">Rat</name>
    <dbReference type="NCBI Taxonomy" id="10116"/>
    <lineage>
        <taxon>Eukaryota</taxon>
        <taxon>Metazoa</taxon>
        <taxon>Chordata</taxon>
        <taxon>Craniata</taxon>
        <taxon>Vertebrata</taxon>
        <taxon>Euteleostomi</taxon>
        <taxon>Mammalia</taxon>
        <taxon>Eutheria</taxon>
        <taxon>Euarchontoglires</taxon>
        <taxon>Glires</taxon>
        <taxon>Rodentia</taxon>
        <taxon>Myomorpha</taxon>
        <taxon>Muroidea</taxon>
        <taxon>Muridae</taxon>
        <taxon>Murinae</taxon>
        <taxon>Rattus</taxon>
    </lineage>
</organism>
<reference key="1">
    <citation type="journal article" date="1989" name="FEBS Lett.">
        <title>Intracellular targeting signals of polymeric immunoglobulin receptors are highly conserved between species.</title>
        <authorList>
            <person name="Banting G."/>
            <person name="Brake B."/>
            <person name="Braghetta P."/>
            <person name="Luzio J.P."/>
            <person name="Stanley K.K."/>
        </authorList>
    </citation>
    <scope>NUCLEOTIDE SEQUENCE [MRNA]</scope>
    <source>
        <tissue>Liver</tissue>
    </source>
</reference>
<reference key="2">
    <citation type="journal article" date="2012" name="Nat. Commun.">
        <title>Quantitative maps of protein phosphorylation sites across 14 different rat organs and tissues.</title>
        <authorList>
            <person name="Lundby A."/>
            <person name="Secher A."/>
            <person name="Lage K."/>
            <person name="Nordsborg N.B."/>
            <person name="Dmytriyev A."/>
            <person name="Lundby C."/>
            <person name="Olsen J.V."/>
        </authorList>
    </citation>
    <scope>PHOSPHORYLATION [LARGE SCALE ANALYSIS] AT SER-678; SER-687 AND SER-694</scope>
    <scope>IDENTIFICATION BY MASS SPECTROMETRY [LARGE SCALE ANALYSIS]</scope>
</reference>
<evidence type="ECO:0000250" key="1">
    <source>
        <dbReference type="UniProtKB" id="O70570"/>
    </source>
</evidence>
<evidence type="ECO:0000250" key="2">
    <source>
        <dbReference type="UniProtKB" id="P01833"/>
    </source>
</evidence>
<evidence type="ECO:0000255" key="3"/>
<evidence type="ECO:0000255" key="4">
    <source>
        <dbReference type="PROSITE-ProRule" id="PRU00114"/>
    </source>
</evidence>
<evidence type="ECO:0000256" key="5">
    <source>
        <dbReference type="SAM" id="MobiDB-lite"/>
    </source>
</evidence>
<evidence type="ECO:0007744" key="6">
    <source>
    </source>
</evidence>
<gene>
    <name type="primary">Pigr</name>
</gene>
<accession>P15083</accession>
<protein>
    <recommendedName>
        <fullName>Polymeric immunoglobulin receptor</fullName>
        <shortName>PIgR</shortName>
        <shortName>Poly-Ig receptor</shortName>
    </recommendedName>
    <component>
        <recommendedName>
            <fullName>Secretory component</fullName>
        </recommendedName>
    </component>
</protein>
<name>PIGR_RAT</name>